<reference key="1">
    <citation type="journal article" date="2003" name="Proc. Natl. Acad. Sci. U.S.A.">
        <title>The complete genome sequence of Mycobacterium bovis.</title>
        <authorList>
            <person name="Garnier T."/>
            <person name="Eiglmeier K."/>
            <person name="Camus J.-C."/>
            <person name="Medina N."/>
            <person name="Mansoor H."/>
            <person name="Pryor M."/>
            <person name="Duthoy S."/>
            <person name="Grondin S."/>
            <person name="Lacroix C."/>
            <person name="Monsempe C."/>
            <person name="Simon S."/>
            <person name="Harris B."/>
            <person name="Atkin R."/>
            <person name="Doggett J."/>
            <person name="Mayes R."/>
            <person name="Keating L."/>
            <person name="Wheeler P.R."/>
            <person name="Parkhill J."/>
            <person name="Barrell B.G."/>
            <person name="Cole S.T."/>
            <person name="Gordon S.V."/>
            <person name="Hewinson R.G."/>
        </authorList>
    </citation>
    <scope>NUCLEOTIDE SEQUENCE [LARGE SCALE GENOMIC DNA]</scope>
    <source>
        <strain>ATCC BAA-935 / AF2122/97</strain>
    </source>
</reference>
<reference key="2">
    <citation type="journal article" date="2017" name="Genome Announc.">
        <title>Updated reference genome sequence and annotation of Mycobacterium bovis AF2122/97.</title>
        <authorList>
            <person name="Malone K.M."/>
            <person name="Farrell D."/>
            <person name="Stuber T.P."/>
            <person name="Schubert O.T."/>
            <person name="Aebersold R."/>
            <person name="Robbe-Austerman S."/>
            <person name="Gordon S.V."/>
        </authorList>
    </citation>
    <scope>NUCLEOTIDE SEQUENCE [LARGE SCALE GENOMIC DNA]</scope>
    <scope>GENOME REANNOTATION</scope>
    <source>
        <strain>ATCC BAA-935 / AF2122/97</strain>
    </source>
</reference>
<evidence type="ECO:0000255" key="1">
    <source>
        <dbReference type="HAMAP-Rule" id="MF_00300"/>
    </source>
</evidence>
<name>AROC_MYCBO</name>
<protein>
    <recommendedName>
        <fullName evidence="1">Chorismate synthase</fullName>
        <shortName evidence="1">CS</shortName>
        <ecNumber evidence="1">4.2.3.5</ecNumber>
    </recommendedName>
    <alternativeName>
        <fullName evidence="1">5-enolpyruvylshikimate-3-phosphate phospholyase</fullName>
    </alternativeName>
</protein>
<organism>
    <name type="scientific">Mycobacterium bovis (strain ATCC BAA-935 / AF2122/97)</name>
    <dbReference type="NCBI Taxonomy" id="233413"/>
    <lineage>
        <taxon>Bacteria</taxon>
        <taxon>Bacillati</taxon>
        <taxon>Actinomycetota</taxon>
        <taxon>Actinomycetes</taxon>
        <taxon>Mycobacteriales</taxon>
        <taxon>Mycobacteriaceae</taxon>
        <taxon>Mycobacterium</taxon>
        <taxon>Mycobacterium tuberculosis complex</taxon>
    </lineage>
</organism>
<accession>P63612</accession>
<accession>A0A1R3Y2B2</accession>
<accession>P95013</accession>
<accession>X2BKS6</accession>
<feature type="chain" id="PRO_0000140612" description="Chorismate synthase">
    <location>
        <begin position="1"/>
        <end position="401"/>
    </location>
</feature>
<feature type="binding site" evidence="1">
    <location>
        <position position="40"/>
    </location>
    <ligand>
        <name>NADP(+)</name>
        <dbReference type="ChEBI" id="CHEBI:58349"/>
    </ligand>
</feature>
<feature type="binding site" evidence="1">
    <location>
        <position position="46"/>
    </location>
    <ligand>
        <name>NADP(+)</name>
        <dbReference type="ChEBI" id="CHEBI:58349"/>
    </ligand>
</feature>
<feature type="binding site" evidence="1">
    <location>
        <begin position="135"/>
        <end position="137"/>
    </location>
    <ligand>
        <name>FMN</name>
        <dbReference type="ChEBI" id="CHEBI:58210"/>
    </ligand>
</feature>
<feature type="binding site" evidence="1">
    <location>
        <begin position="256"/>
        <end position="257"/>
    </location>
    <ligand>
        <name>FMN</name>
        <dbReference type="ChEBI" id="CHEBI:58210"/>
    </ligand>
</feature>
<feature type="binding site" evidence="1">
    <location>
        <position position="300"/>
    </location>
    <ligand>
        <name>FMN</name>
        <dbReference type="ChEBI" id="CHEBI:58210"/>
    </ligand>
</feature>
<feature type="binding site" evidence="1">
    <location>
        <begin position="315"/>
        <end position="319"/>
    </location>
    <ligand>
        <name>FMN</name>
        <dbReference type="ChEBI" id="CHEBI:58210"/>
    </ligand>
</feature>
<feature type="binding site" evidence="1">
    <location>
        <position position="341"/>
    </location>
    <ligand>
        <name>FMN</name>
        <dbReference type="ChEBI" id="CHEBI:58210"/>
    </ligand>
</feature>
<sequence length="401" mass="41792">MLRWITAGESHGRALVAVVEGMVAGVHVTSADIADQLARRRLGYGRGARMTFERDAVTVLSGIRHGSTLGGPIAIEIGNTEWPKWETVMAADPVDPAELADVARNAPLTRPRPGHADYAGMLKYGFDDARPVLERASARETAARVAAGTVARAFLRQALGVEVLSHVISIGASAPYEGPPPRAEDLPAIDASPVRAYDKAAEADMIAQIEAAKKDGDTLGGVVEAVALGLPVGLGSFTSGDHRLDSQLAAAVMGIQAIKGVEIGDGFQTARRRGSRAHDEMYPGPDGVVRSTNRAGGLEGGMTNGQPLRVRAAMKPISTVPRALATVDLATGDEAVAIHQRSDVCAVPAAGVVVETMVALVLARAALEKFGGDSLAETQRNIAAYQRSVADREAPAARVSG</sequence>
<comment type="function">
    <text evidence="1">Catalyzes the anti-1,4-elimination of the C-3 phosphate and the C-6 proR hydrogen from 5-enolpyruvylshikimate-3-phosphate (EPSP) to yield chorismate, which is the branch point compound that serves as the starting substrate for the three terminal pathways of aromatic amino acid biosynthesis. This reaction introduces a second double bond into the aromatic ring system.</text>
</comment>
<comment type="catalytic activity">
    <reaction evidence="1">
        <text>5-O-(1-carboxyvinyl)-3-phosphoshikimate = chorismate + phosphate</text>
        <dbReference type="Rhea" id="RHEA:21020"/>
        <dbReference type="ChEBI" id="CHEBI:29748"/>
        <dbReference type="ChEBI" id="CHEBI:43474"/>
        <dbReference type="ChEBI" id="CHEBI:57701"/>
        <dbReference type="EC" id="4.2.3.5"/>
    </reaction>
</comment>
<comment type="cofactor">
    <cofactor evidence="1">
        <name>FMNH2</name>
        <dbReference type="ChEBI" id="CHEBI:57618"/>
    </cofactor>
    <text evidence="1">Reduced FMN (FMNH(2)).</text>
</comment>
<comment type="pathway">
    <text evidence="1">Metabolic intermediate biosynthesis; chorismate biosynthesis; chorismate from D-erythrose 4-phosphate and phosphoenolpyruvate: step 7/7.</text>
</comment>
<comment type="subunit">
    <text evidence="1">Homotetramer.</text>
</comment>
<comment type="similarity">
    <text evidence="1">Belongs to the chorismate synthase family.</text>
</comment>
<keyword id="KW-0028">Amino-acid biosynthesis</keyword>
<keyword id="KW-0057">Aromatic amino acid biosynthesis</keyword>
<keyword id="KW-0274">FAD</keyword>
<keyword id="KW-0285">Flavoprotein</keyword>
<keyword id="KW-0288">FMN</keyword>
<keyword id="KW-0456">Lyase</keyword>
<keyword id="KW-0521">NADP</keyword>
<keyword id="KW-1185">Reference proteome</keyword>
<dbReference type="EC" id="4.2.3.5" evidence="1"/>
<dbReference type="EMBL" id="LT708304">
    <property type="protein sequence ID" value="SIU01186.1"/>
    <property type="molecule type" value="Genomic_DNA"/>
</dbReference>
<dbReference type="RefSeq" id="NP_856215.1">
    <property type="nucleotide sequence ID" value="NC_002945.3"/>
</dbReference>
<dbReference type="RefSeq" id="WP_003413027.1">
    <property type="nucleotide sequence ID" value="NC_002945.4"/>
</dbReference>
<dbReference type="SMR" id="P63612"/>
<dbReference type="KEGG" id="mbo:BQ2027_MB2569C"/>
<dbReference type="PATRIC" id="fig|233413.5.peg.2826"/>
<dbReference type="UniPathway" id="UPA00053">
    <property type="reaction ID" value="UER00090"/>
</dbReference>
<dbReference type="Proteomes" id="UP000001419">
    <property type="component" value="Chromosome"/>
</dbReference>
<dbReference type="GO" id="GO:0005829">
    <property type="term" value="C:cytosol"/>
    <property type="evidence" value="ECO:0007669"/>
    <property type="project" value="TreeGrafter"/>
</dbReference>
<dbReference type="GO" id="GO:0004107">
    <property type="term" value="F:chorismate synthase activity"/>
    <property type="evidence" value="ECO:0007669"/>
    <property type="project" value="UniProtKB-UniRule"/>
</dbReference>
<dbReference type="GO" id="GO:0010181">
    <property type="term" value="F:FMN binding"/>
    <property type="evidence" value="ECO:0007669"/>
    <property type="project" value="TreeGrafter"/>
</dbReference>
<dbReference type="GO" id="GO:0008652">
    <property type="term" value="P:amino acid biosynthetic process"/>
    <property type="evidence" value="ECO:0007669"/>
    <property type="project" value="UniProtKB-KW"/>
</dbReference>
<dbReference type="GO" id="GO:0009073">
    <property type="term" value="P:aromatic amino acid family biosynthetic process"/>
    <property type="evidence" value="ECO:0007669"/>
    <property type="project" value="UniProtKB-KW"/>
</dbReference>
<dbReference type="GO" id="GO:0009423">
    <property type="term" value="P:chorismate biosynthetic process"/>
    <property type="evidence" value="ECO:0007669"/>
    <property type="project" value="UniProtKB-UniRule"/>
</dbReference>
<dbReference type="CDD" id="cd07304">
    <property type="entry name" value="Chorismate_synthase"/>
    <property type="match status" value="1"/>
</dbReference>
<dbReference type="FunFam" id="3.60.150.10:FF:000002">
    <property type="entry name" value="Chorismate synthase"/>
    <property type="match status" value="1"/>
</dbReference>
<dbReference type="Gene3D" id="3.60.150.10">
    <property type="entry name" value="Chorismate synthase AroC"/>
    <property type="match status" value="1"/>
</dbReference>
<dbReference type="HAMAP" id="MF_00300">
    <property type="entry name" value="Chorismate_synth"/>
    <property type="match status" value="1"/>
</dbReference>
<dbReference type="InterPro" id="IPR000453">
    <property type="entry name" value="Chorismate_synth"/>
</dbReference>
<dbReference type="InterPro" id="IPR035904">
    <property type="entry name" value="Chorismate_synth_AroC_sf"/>
</dbReference>
<dbReference type="InterPro" id="IPR020541">
    <property type="entry name" value="Chorismate_synthase_CS"/>
</dbReference>
<dbReference type="NCBIfam" id="TIGR00033">
    <property type="entry name" value="aroC"/>
    <property type="match status" value="1"/>
</dbReference>
<dbReference type="NCBIfam" id="NF003793">
    <property type="entry name" value="PRK05382.1"/>
    <property type="match status" value="1"/>
</dbReference>
<dbReference type="PANTHER" id="PTHR21085">
    <property type="entry name" value="CHORISMATE SYNTHASE"/>
    <property type="match status" value="1"/>
</dbReference>
<dbReference type="PANTHER" id="PTHR21085:SF0">
    <property type="entry name" value="CHORISMATE SYNTHASE"/>
    <property type="match status" value="1"/>
</dbReference>
<dbReference type="Pfam" id="PF01264">
    <property type="entry name" value="Chorismate_synt"/>
    <property type="match status" value="1"/>
</dbReference>
<dbReference type="PIRSF" id="PIRSF001456">
    <property type="entry name" value="Chorismate_synth"/>
    <property type="match status" value="1"/>
</dbReference>
<dbReference type="SUPFAM" id="SSF103263">
    <property type="entry name" value="Chorismate synthase, AroC"/>
    <property type="match status" value="1"/>
</dbReference>
<dbReference type="PROSITE" id="PS00787">
    <property type="entry name" value="CHORISMATE_SYNTHASE_1"/>
    <property type="match status" value="1"/>
</dbReference>
<dbReference type="PROSITE" id="PS00788">
    <property type="entry name" value="CHORISMATE_SYNTHASE_2"/>
    <property type="match status" value="1"/>
</dbReference>
<dbReference type="PROSITE" id="PS00789">
    <property type="entry name" value="CHORISMATE_SYNTHASE_3"/>
    <property type="match status" value="1"/>
</dbReference>
<proteinExistence type="inferred from homology"/>
<gene>
    <name evidence="1" type="primary">aroC</name>
    <name type="synonym">aroF</name>
    <name type="ordered locus">BQ2027_MB2569C</name>
</gene>